<proteinExistence type="inferred from homology"/>
<protein>
    <recommendedName>
        <fullName evidence="1">DNA repair protein RecO</fullName>
    </recommendedName>
    <alternativeName>
        <fullName evidence="1">Recombination protein O</fullName>
    </alternativeName>
</protein>
<feature type="chain" id="PRO_0000325203" description="DNA repair protein RecO">
    <location>
        <begin position="1"/>
        <end position="246"/>
    </location>
</feature>
<sequence length="246" mass="27104">MKGAVQQEPAYVVHRRPWRETALLVDLFTLNHGRMSVVARGANSTKSPLKAQLQPFQPLLVDWTGKSELKTLVQLEVRSAPAVSQPRALYSGFYINELVQRVLPVADPSPALFASYIETLQALADLSSQDDVEPLLRRFERAFAASLGYDFAWDETTDTGMSVQAGELYGYDPGQGIVSNLAPELPLRQLPGEALLALAAGDFISEAPRKTAKRVMRVLVDYLLQGRPLHSRSLFSHSNPSSGRES</sequence>
<comment type="function">
    <text evidence="1">Involved in DNA repair and RecF pathway recombination.</text>
</comment>
<comment type="similarity">
    <text evidence="1">Belongs to the RecO family.</text>
</comment>
<organism>
    <name type="scientific">Marinobacter nauticus (strain ATCC 700491 / DSM 11845 / VT8)</name>
    <name type="common">Marinobacter aquaeolei</name>
    <dbReference type="NCBI Taxonomy" id="351348"/>
    <lineage>
        <taxon>Bacteria</taxon>
        <taxon>Pseudomonadati</taxon>
        <taxon>Pseudomonadota</taxon>
        <taxon>Gammaproteobacteria</taxon>
        <taxon>Pseudomonadales</taxon>
        <taxon>Marinobacteraceae</taxon>
        <taxon>Marinobacter</taxon>
    </lineage>
</organism>
<gene>
    <name evidence="1" type="primary">recO</name>
    <name type="ordered locus">Maqu_2243</name>
</gene>
<dbReference type="EMBL" id="CP000514">
    <property type="protein sequence ID" value="ABM19322.1"/>
    <property type="molecule type" value="Genomic_DNA"/>
</dbReference>
<dbReference type="RefSeq" id="WP_011785710.1">
    <property type="nucleotide sequence ID" value="NC_008740.1"/>
</dbReference>
<dbReference type="SMR" id="A1U2V3"/>
<dbReference type="STRING" id="351348.Maqu_2243"/>
<dbReference type="KEGG" id="maq:Maqu_2243"/>
<dbReference type="eggNOG" id="COG1381">
    <property type="taxonomic scope" value="Bacteria"/>
</dbReference>
<dbReference type="HOGENOM" id="CLU_066645_1_0_6"/>
<dbReference type="OrthoDB" id="9804792at2"/>
<dbReference type="Proteomes" id="UP000000998">
    <property type="component" value="Chromosome"/>
</dbReference>
<dbReference type="GO" id="GO:0043590">
    <property type="term" value="C:bacterial nucleoid"/>
    <property type="evidence" value="ECO:0007669"/>
    <property type="project" value="TreeGrafter"/>
</dbReference>
<dbReference type="GO" id="GO:0006310">
    <property type="term" value="P:DNA recombination"/>
    <property type="evidence" value="ECO:0007669"/>
    <property type="project" value="UniProtKB-UniRule"/>
</dbReference>
<dbReference type="GO" id="GO:0006302">
    <property type="term" value="P:double-strand break repair"/>
    <property type="evidence" value="ECO:0007669"/>
    <property type="project" value="TreeGrafter"/>
</dbReference>
<dbReference type="Gene3D" id="2.40.50.140">
    <property type="entry name" value="Nucleic acid-binding proteins"/>
    <property type="match status" value="1"/>
</dbReference>
<dbReference type="Gene3D" id="1.20.1440.120">
    <property type="entry name" value="Recombination protein O, C-terminal domain"/>
    <property type="match status" value="1"/>
</dbReference>
<dbReference type="HAMAP" id="MF_00201">
    <property type="entry name" value="RecO"/>
    <property type="match status" value="1"/>
</dbReference>
<dbReference type="InterPro" id="IPR037278">
    <property type="entry name" value="ARFGAP/RecO"/>
</dbReference>
<dbReference type="InterPro" id="IPR022572">
    <property type="entry name" value="DNA_rep/recomb_RecO_N"/>
</dbReference>
<dbReference type="InterPro" id="IPR012340">
    <property type="entry name" value="NA-bd_OB-fold"/>
</dbReference>
<dbReference type="InterPro" id="IPR003717">
    <property type="entry name" value="RecO"/>
</dbReference>
<dbReference type="InterPro" id="IPR042242">
    <property type="entry name" value="RecO_C"/>
</dbReference>
<dbReference type="NCBIfam" id="TIGR00613">
    <property type="entry name" value="reco"/>
    <property type="match status" value="1"/>
</dbReference>
<dbReference type="PANTHER" id="PTHR33991">
    <property type="entry name" value="DNA REPAIR PROTEIN RECO"/>
    <property type="match status" value="1"/>
</dbReference>
<dbReference type="PANTHER" id="PTHR33991:SF1">
    <property type="entry name" value="DNA REPAIR PROTEIN RECO"/>
    <property type="match status" value="1"/>
</dbReference>
<dbReference type="Pfam" id="PF02565">
    <property type="entry name" value="RecO_C"/>
    <property type="match status" value="1"/>
</dbReference>
<dbReference type="Pfam" id="PF11967">
    <property type="entry name" value="RecO_N"/>
    <property type="match status" value="1"/>
</dbReference>
<dbReference type="SUPFAM" id="SSF57863">
    <property type="entry name" value="ArfGap/RecO-like zinc finger"/>
    <property type="match status" value="1"/>
</dbReference>
<dbReference type="SUPFAM" id="SSF50249">
    <property type="entry name" value="Nucleic acid-binding proteins"/>
    <property type="match status" value="1"/>
</dbReference>
<accession>A1U2V3</accession>
<reference key="1">
    <citation type="journal article" date="2011" name="Appl. Environ. Microbiol.">
        <title>Genomic potential of Marinobacter aquaeolei, a biogeochemical 'opportunitroph'.</title>
        <authorList>
            <person name="Singer E."/>
            <person name="Webb E.A."/>
            <person name="Nelson W.C."/>
            <person name="Heidelberg J.F."/>
            <person name="Ivanova N."/>
            <person name="Pati A."/>
            <person name="Edwards K.J."/>
        </authorList>
    </citation>
    <scope>NUCLEOTIDE SEQUENCE [LARGE SCALE GENOMIC DNA]</scope>
    <source>
        <strain>ATCC 700491 / DSM 11845 / VT8</strain>
    </source>
</reference>
<evidence type="ECO:0000255" key="1">
    <source>
        <dbReference type="HAMAP-Rule" id="MF_00201"/>
    </source>
</evidence>
<name>RECO_MARN8</name>
<keyword id="KW-0227">DNA damage</keyword>
<keyword id="KW-0233">DNA recombination</keyword>
<keyword id="KW-0234">DNA repair</keyword>